<sequence length="413" mass="44964">MALRRFLRTSPITSTAQPAPLYDNQDIQDIVGAYARPWQSRFGDITITTTSAPVWSGRYPSVAARNIIVNTILGAHLNAFSGGVIAQYRGLTWRDNIMSSLAPPSQNPPPPAWVPAENVQLDSDNYPQYALNLSKMWSVNLDVHIMTMWALSDYGPLYEISVPTAPMPAMTTAALMAYIGCSITQLAMTAYQYAGQLPQTAAATMTTTLRWLAAIWFGSLCGVVHRNHTVNGFYFDFGKPGFNPDHAVLKWNDGNRAAPPAAARFRVYRVRSPHWQQMTSEVAGAILAQSVTAVAGLTAMFNNRGLPVWAQNIPHFTGAAAGTRVSRTYNPVTMAAARHQNWQAAGLITAVKQAELDQQYTDYAQAIEVHLTAQLAANPVANGRMPIQPFLPADFAAAGGTNQVVADARLMFP</sequence>
<comment type="function">
    <text evidence="1">Located at the interface of the incomplete T=13 outer capsid and the pseudo T=2 inner capsid, 120 VP6 subunits clamp and stabilize the inner capsid shell.</text>
</comment>
<comment type="subunit">
    <text evidence="1">Interacts with capsid proteins VP3, VP4 and VP7.</text>
</comment>
<comment type="subcellular location">
    <subcellularLocation>
        <location>Virion</location>
    </subcellularLocation>
</comment>
<comment type="similarity">
    <text evidence="2">Belongs to the reoviridae clamp protein family.</text>
</comment>
<dbReference type="EMBL" id="EF589105">
    <property type="protein sequence ID" value="ABV01047.1"/>
    <property type="molecule type" value="Genomic_RNA"/>
</dbReference>
<dbReference type="RefSeq" id="YP_001837102.1">
    <property type="nucleotide sequence ID" value="NC_010591.1"/>
</dbReference>
<dbReference type="SMR" id="B2BNE7"/>
<dbReference type="KEGG" id="vg:6218807"/>
<dbReference type="Proteomes" id="UP000001674">
    <property type="component" value="Genome"/>
</dbReference>
<dbReference type="GO" id="GO:0039626">
    <property type="term" value="C:viral intermediate capsid"/>
    <property type="evidence" value="ECO:0007669"/>
    <property type="project" value="UniProtKB-KW"/>
</dbReference>
<dbReference type="Gene3D" id="1.10.287.1520">
    <property type="match status" value="1"/>
</dbReference>
<dbReference type="InterPro" id="IPR004317">
    <property type="entry name" value="Sigma_1_2_reovir"/>
</dbReference>
<dbReference type="Pfam" id="PF03084">
    <property type="entry name" value="Sigma_1_2"/>
    <property type="match status" value="1"/>
</dbReference>
<accession>B2BNE7</accession>
<evidence type="ECO:0000269" key="1">
    <source>
    </source>
</evidence>
<evidence type="ECO:0000305" key="2"/>
<reference key="1">
    <citation type="journal article" date="2008" name="Virology">
        <title>Complete characterisation of the American grass carp reovirus genome (genus Aquareovirus: family Reoviridae) reveals an evolutionary link between aquareoviruses and coltiviruses.</title>
        <authorList>
            <person name="Mohd Jaafar F."/>
            <person name="Goodwin A.E."/>
            <person name="Belhouchet M."/>
            <person name="Merry G."/>
            <person name="Fang Q."/>
            <person name="Cantaloube J.F."/>
            <person name="Biagini P."/>
            <person name="de Micco P."/>
            <person name="Mertens P.P."/>
            <person name="Attoui H."/>
        </authorList>
    </citation>
    <scope>NUCLEOTIDE SEQUENCE [GENOMIC RNA]</scope>
</reference>
<reference key="2">
    <citation type="journal article" date="2008" name="J. Mol. Biol.">
        <title>Subnanometer-resolution structures of the grass carp reovirus core and virion.</title>
        <authorList>
            <person name="Cheng L."/>
            <person name="Fang Q."/>
            <person name="Shah S."/>
            <person name="Atanasov I.C."/>
            <person name="Zhou Z.H."/>
        </authorList>
    </citation>
    <scope>FUNCTION</scope>
    <scope>INTERACTION WITH VP3; VP4 AND VP7</scope>
    <source>
        <strain>GCRV</strain>
    </source>
</reference>
<organismHost>
    <name type="scientific">Ctenopharyngodon idella</name>
    <name type="common">Grass carp</name>
    <name type="synonym">Leuciscus idella</name>
    <dbReference type="NCBI Taxonomy" id="7959"/>
</organismHost>
<protein>
    <recommendedName>
        <fullName>Clamp protein VP6</fullName>
    </recommendedName>
</protein>
<name>VP6_AQRVG</name>
<proteinExistence type="evidence at protein level"/>
<gene>
    <name type="primary">S8</name>
</gene>
<organism>
    <name type="scientific">Aquareovirus G (isolate American grass carp/USA/PB01-155/-)</name>
    <name type="common">AQRV-G</name>
    <dbReference type="NCBI Taxonomy" id="648234"/>
    <lineage>
        <taxon>Viruses</taxon>
        <taxon>Riboviria</taxon>
        <taxon>Orthornavirae</taxon>
        <taxon>Duplornaviricota</taxon>
        <taxon>Resentoviricetes</taxon>
        <taxon>Reovirales</taxon>
        <taxon>Spinareoviridae</taxon>
        <taxon>Aquareovirus</taxon>
        <taxon>Aquareovirus graminis</taxon>
    </lineage>
</organism>
<keyword id="KW-0167">Capsid protein</keyword>
<keyword id="KW-1154">Intermediate capsid protein</keyword>
<keyword id="KW-1185">Reference proteome</keyword>
<keyword id="KW-0946">Virion</keyword>
<feature type="chain" id="PRO_0000404192" description="Clamp protein VP6">
    <location>
        <begin position="1"/>
        <end position="413"/>
    </location>
</feature>